<feature type="peptide" id="PRO_0000449600" description="Dermaseptin-DA4" evidence="1">
    <location>
        <begin position="1"/>
        <end position="32"/>
    </location>
</feature>
<comment type="function">
    <text evidence="1">Antimicrobial peptide with activity against Gram-negative bacteria, but not against Gram-positive bacteria (PubMed:19843179). Active against E.coli (MIC=5 uM), and P.aeruginosa (MIC=40 uM) (PubMed:19843179). Acts by disrupting cell membranes (PubMed:19843179). Is able to depolarize membranes of Gram-positive and Gram-negative bacteria (PubMed:19843179). Also acts as a potent chemoattractant for human leukocytes and activates them mainly through a GPCR, possibly FPRL1 coupled to the ERK1/2 MAPK pathway (PubMed:19843179). Is unstructured in water but become helical upon binding to anionic lipids (PubMed:19843179). In contrast to most dermaseptins, is not structured in the presence of zwitterionic lipids (PubMed:19843179). Does not show hemolytic activity (PubMed:19843179).</text>
</comment>
<comment type="subcellular location">
    <subcellularLocation>
        <location evidence="1">Secreted</location>
    </subcellularLocation>
    <subcellularLocation>
        <location evidence="1">Target cell membrane</location>
    </subcellularLocation>
    <text evidence="4">Forms a helical membrane channel in the prey.</text>
</comment>
<comment type="tissue specificity">
    <text evidence="4">Expressed by the skin glands.</text>
</comment>
<comment type="mass spectrometry" mass="3063.26" method="MALDI" evidence="1"/>
<comment type="similarity">
    <text evidence="3">Belongs to the frog skin active peptide (FSAP) family. Dermaseptin subfamily.</text>
</comment>
<comment type="online information" name="The antimicrobial peptide database">
    <link uri="https://wangapd3.com/database/query_output.php?ID=1546"/>
</comment>
<dbReference type="SMR" id="P0DTD5"/>
<dbReference type="GO" id="GO:0005576">
    <property type="term" value="C:extracellular region"/>
    <property type="evidence" value="ECO:0007669"/>
    <property type="project" value="UniProtKB-SubCell"/>
</dbReference>
<dbReference type="GO" id="GO:0016020">
    <property type="term" value="C:membrane"/>
    <property type="evidence" value="ECO:0007669"/>
    <property type="project" value="UniProtKB-KW"/>
</dbReference>
<dbReference type="GO" id="GO:0044218">
    <property type="term" value="C:other organism cell membrane"/>
    <property type="evidence" value="ECO:0007669"/>
    <property type="project" value="UniProtKB-KW"/>
</dbReference>
<dbReference type="GO" id="GO:0006935">
    <property type="term" value="P:chemotaxis"/>
    <property type="evidence" value="ECO:0007669"/>
    <property type="project" value="UniProtKB-KW"/>
</dbReference>
<dbReference type="GO" id="GO:0042742">
    <property type="term" value="P:defense response to bacterium"/>
    <property type="evidence" value="ECO:0007669"/>
    <property type="project" value="UniProtKB-KW"/>
</dbReference>
<dbReference type="GO" id="GO:0045087">
    <property type="term" value="P:innate immune response"/>
    <property type="evidence" value="ECO:0007669"/>
    <property type="project" value="UniProtKB-KW"/>
</dbReference>
<dbReference type="InterPro" id="IPR022731">
    <property type="entry name" value="Dermaseptin_dom"/>
</dbReference>
<dbReference type="Pfam" id="PF12121">
    <property type="entry name" value="DD_K"/>
    <property type="match status" value="1"/>
</dbReference>
<keyword id="KW-0878">Amphibian defense peptide</keyword>
<keyword id="KW-0044">Antibiotic</keyword>
<keyword id="KW-0929">Antimicrobial</keyword>
<keyword id="KW-0145">Chemotaxis</keyword>
<keyword id="KW-0903">Direct protein sequencing</keyword>
<keyword id="KW-0391">Immunity</keyword>
<keyword id="KW-0399">Innate immunity</keyword>
<keyword id="KW-0472">Membrane</keyword>
<keyword id="KW-0964">Secreted</keyword>
<keyword id="KW-1052">Target cell membrane</keyword>
<keyword id="KW-1053">Target membrane</keyword>
<reference key="1">
    <citation type="journal article" date="2009" name="FEBS J.">
        <title>Dermaseptin DA4, although closely related to dermaseptin B2, presents chemotactic and Gram-negative selective bactericidal activities.</title>
        <authorList>
            <person name="Auvynet C."/>
            <person name="Joanne P."/>
            <person name="Bourdais J."/>
            <person name="Nicolas P."/>
            <person name="Lacombe C."/>
            <person name="Rosenstein Y."/>
        </authorList>
    </citation>
    <scope>PROTEIN SEQUENCE</scope>
    <scope>SYNTHESIS</scope>
    <scope>FUNCTION</scope>
    <scope>SUBCELLULAR LOCATION</scope>
    <scope>MASS SPECTROMETRY</scope>
</reference>
<accession>P0DTD5</accession>
<name>DRS4_AGADC</name>
<proteinExistence type="evidence at protein level"/>
<evidence type="ECO:0000269" key="1">
    <source>
    </source>
</evidence>
<evidence type="ECO:0000303" key="2">
    <source>
    </source>
</evidence>
<evidence type="ECO:0000305" key="3"/>
<evidence type="ECO:0000305" key="4">
    <source>
    </source>
</evidence>
<sequence length="32" mass="3060">GMWSKIKNAGKAAKAAAKAAGKAALGAVSEAM</sequence>
<protein>
    <recommendedName>
        <fullName evidence="2">Dermaseptin-DA4</fullName>
        <shortName evidence="2">DRS-DA4</shortName>
    </recommendedName>
</protein>
<organism>
    <name type="scientific">Agalychnis dacnicolor</name>
    <name type="common">Giant Mexican leaf frog</name>
    <name type="synonym">Pachymedusa dacnicolor</name>
    <dbReference type="NCBI Taxonomy" id="75988"/>
    <lineage>
        <taxon>Eukaryota</taxon>
        <taxon>Metazoa</taxon>
        <taxon>Chordata</taxon>
        <taxon>Craniata</taxon>
        <taxon>Vertebrata</taxon>
        <taxon>Euteleostomi</taxon>
        <taxon>Amphibia</taxon>
        <taxon>Batrachia</taxon>
        <taxon>Anura</taxon>
        <taxon>Neobatrachia</taxon>
        <taxon>Hyloidea</taxon>
        <taxon>Hylidae</taxon>
        <taxon>Phyllomedusinae</taxon>
        <taxon>Agalychnis</taxon>
    </lineage>
</organism>